<organism>
    <name type="scientific">Pongo abelii</name>
    <name type="common">Sumatran orangutan</name>
    <name type="synonym">Pongo pygmaeus abelii</name>
    <dbReference type="NCBI Taxonomy" id="9601"/>
    <lineage>
        <taxon>Eukaryota</taxon>
        <taxon>Metazoa</taxon>
        <taxon>Chordata</taxon>
        <taxon>Craniata</taxon>
        <taxon>Vertebrata</taxon>
        <taxon>Euteleostomi</taxon>
        <taxon>Mammalia</taxon>
        <taxon>Eutheria</taxon>
        <taxon>Euarchontoglires</taxon>
        <taxon>Primates</taxon>
        <taxon>Haplorrhini</taxon>
        <taxon>Catarrhini</taxon>
        <taxon>Hominidae</taxon>
        <taxon>Pongo</taxon>
    </lineage>
</organism>
<evidence type="ECO:0000250" key="1">
    <source>
        <dbReference type="UniProtKB" id="O70133"/>
    </source>
</evidence>
<evidence type="ECO:0000250" key="2">
    <source>
        <dbReference type="UniProtKB" id="Q08211"/>
    </source>
</evidence>
<evidence type="ECO:0000255" key="3"/>
<evidence type="ECO:0000255" key="4">
    <source>
        <dbReference type="PROSITE-ProRule" id="PRU00266"/>
    </source>
</evidence>
<evidence type="ECO:0000255" key="5">
    <source>
        <dbReference type="PROSITE-ProRule" id="PRU00541"/>
    </source>
</evidence>
<evidence type="ECO:0000255" key="6">
    <source>
        <dbReference type="PROSITE-ProRule" id="PRU00542"/>
    </source>
</evidence>
<evidence type="ECO:0000256" key="7">
    <source>
        <dbReference type="SAM" id="MobiDB-lite"/>
    </source>
</evidence>
<evidence type="ECO:0000305" key="8"/>
<feature type="chain" id="PRO_0000055159" description="ATP-dependent RNA helicase A">
    <location>
        <begin position="1"/>
        <end position="1269"/>
    </location>
</feature>
<feature type="domain" description="DRBM 1" evidence="2 4">
    <location>
        <begin position="3"/>
        <end position="71"/>
    </location>
</feature>
<feature type="domain" description="DRBM 2" evidence="2 4">
    <location>
        <begin position="180"/>
        <end position="252"/>
    </location>
</feature>
<feature type="domain" description="Helicase ATP-binding" evidence="2 5">
    <location>
        <begin position="398"/>
        <end position="564"/>
    </location>
</feature>
<feature type="domain" description="Helicase C-terminal" evidence="6">
    <location>
        <begin position="636"/>
        <end position="809"/>
    </location>
</feature>
<feature type="region of interest" description="Interaction with CREBBP" evidence="2">
    <location>
        <begin position="1"/>
        <end position="250"/>
    </location>
</feature>
<feature type="region of interest" description="siRNA-binding" evidence="2">
    <location>
        <begin position="5"/>
        <end position="9"/>
    </location>
</feature>
<feature type="region of interest" description="siRNA-binding" evidence="2">
    <location>
        <begin position="53"/>
        <end position="55"/>
    </location>
</feature>
<feature type="region of interest" description="Disordered" evidence="7">
    <location>
        <begin position="83"/>
        <end position="118"/>
    </location>
</feature>
<feature type="region of interest" description="siRNA-binding" evidence="2">
    <location>
        <begin position="182"/>
        <end position="186"/>
    </location>
</feature>
<feature type="region of interest" description="Interaction with BRCA1" evidence="2">
    <location>
        <begin position="230"/>
        <end position="325"/>
    </location>
</feature>
<feature type="region of interest" description="siRNA-binding" evidence="2">
    <location>
        <begin position="234"/>
        <end position="236"/>
    </location>
</feature>
<feature type="region of interest" description="Necessary for interaction with RNA polymerase II holoenzyme" evidence="2">
    <location>
        <begin position="255"/>
        <end position="664"/>
    </location>
</feature>
<feature type="region of interest" description="Necessary for interaction with H2AX" evidence="2">
    <location>
        <begin position="313"/>
        <end position="952"/>
    </location>
</feature>
<feature type="region of interest" description="MTAD" evidence="2">
    <location>
        <begin position="331"/>
        <end position="380"/>
    </location>
</feature>
<feature type="region of interest" description="Core helicase" evidence="2">
    <location>
        <begin position="398"/>
        <end position="809"/>
    </location>
</feature>
<feature type="region of interest" description="Disordered" evidence="7">
    <location>
        <begin position="588"/>
        <end position="608"/>
    </location>
</feature>
<feature type="region of interest" description="HA2" evidence="2">
    <location>
        <begin position="831"/>
        <end position="919"/>
    </location>
</feature>
<feature type="region of interest" description="OB-fold" evidence="2">
    <location>
        <begin position="958"/>
        <end position="1074"/>
    </location>
</feature>
<feature type="region of interest" description="NTD region" evidence="2">
    <location>
        <begin position="1150"/>
        <end position="1258"/>
    </location>
</feature>
<feature type="region of interest" description="RGG" evidence="2">
    <location>
        <begin position="1151"/>
        <end position="1269"/>
    </location>
</feature>
<feature type="region of interest" description="Disordered" evidence="7">
    <location>
        <begin position="1228"/>
        <end position="1253"/>
    </location>
</feature>
<feature type="short sequence motif" description="DEIH box">
    <location>
        <begin position="511"/>
        <end position="514"/>
    </location>
</feature>
<feature type="short sequence motif" description="Nuclear localization signal (NLS1)" evidence="3">
    <location>
        <begin position="586"/>
        <end position="595"/>
    </location>
</feature>
<feature type="short sequence motif" description="Nuclear localization signal (NLS2)" evidence="2">
    <location>
        <begin position="1155"/>
        <end position="1173"/>
    </location>
</feature>
<feature type="binding site" evidence="2 5">
    <location>
        <begin position="411"/>
        <end position="419"/>
    </location>
    <ligand>
        <name>ATP</name>
        <dbReference type="ChEBI" id="CHEBI:30616"/>
    </ligand>
</feature>
<feature type="binding site" evidence="2">
    <location>
        <position position="418"/>
    </location>
    <ligand>
        <name>Mn(2+)</name>
        <dbReference type="ChEBI" id="CHEBI:29035"/>
    </ligand>
</feature>
<feature type="binding site" evidence="2">
    <location>
        <position position="512"/>
    </location>
    <ligand>
        <name>Mn(2+)</name>
        <dbReference type="ChEBI" id="CHEBI:29035"/>
    </ligand>
</feature>
<feature type="modified residue" description="Phosphoserine" evidence="2">
    <location>
        <position position="87"/>
    </location>
</feature>
<feature type="modified residue" description="Phosphoserine" evidence="2">
    <location>
        <position position="125"/>
    </location>
</feature>
<feature type="modified residue" description="N6-acetyllysine; alternate" evidence="1">
    <location>
        <position position="146"/>
    </location>
</feature>
<feature type="modified residue" description="N6-methyllysine; alternate" evidence="2">
    <location>
        <position position="146"/>
    </location>
</feature>
<feature type="modified residue" description="N6-acetyllysine" evidence="2">
    <location>
        <position position="191"/>
    </location>
</feature>
<feature type="modified residue" description="N6-acetyllysine" evidence="2">
    <location>
        <position position="199"/>
    </location>
</feature>
<feature type="modified residue" description="Phosphoserine" evidence="2">
    <location>
        <position position="321"/>
    </location>
</feature>
<feature type="modified residue" description="Phosphoserine" evidence="2">
    <location>
        <position position="449"/>
    </location>
</feature>
<feature type="modified residue" description="Phosphoserine" evidence="2">
    <location>
        <position position="506"/>
    </location>
</feature>
<feature type="modified residue" description="N6-acetyllysine" evidence="2">
    <location>
        <position position="1024"/>
    </location>
</feature>
<feature type="modified residue" description="Asymmetric dimethylarginine" evidence="1">
    <location>
        <position position="1166"/>
    </location>
</feature>
<feature type="modified residue" description="Omega-N-methylarginine" evidence="2">
    <location>
        <position position="1175"/>
    </location>
</feature>
<feature type="modified residue" description="Asymmetric dimethylarginine" evidence="1">
    <location>
        <position position="1218"/>
    </location>
</feature>
<feature type="modified residue" description="Asymmetric dimethylarginine" evidence="1">
    <location>
        <position position="1234"/>
    </location>
</feature>
<feature type="modified residue" description="Asymmetric dimethylarginine" evidence="1">
    <location>
        <position position="1241"/>
    </location>
</feature>
<feature type="modified residue" description="Asymmetric dimethylarginine" evidence="1">
    <location>
        <position position="1248"/>
    </location>
</feature>
<feature type="modified residue" description="Asymmetric dimethylarginine" evidence="1">
    <location>
        <position position="1264"/>
    </location>
</feature>
<feature type="cross-link" description="Glycyl lysine isopeptide (Lys-Gly) (interchain with G-Cter in SUMO2)" evidence="2">
    <location>
        <position position="697"/>
    </location>
</feature>
<keyword id="KW-0007">Acetylation</keyword>
<keyword id="KW-0010">Activator</keyword>
<keyword id="KW-0067">ATP-binding</keyword>
<keyword id="KW-0090">Biological rhythms</keyword>
<keyword id="KW-0963">Cytoplasm</keyword>
<keyword id="KW-0206">Cytoskeleton</keyword>
<keyword id="KW-0235">DNA replication</keyword>
<keyword id="KW-0238">DNA-binding</keyword>
<keyword id="KW-0347">Helicase</keyword>
<keyword id="KW-0378">Hydrolase</keyword>
<keyword id="KW-0391">Immunity</keyword>
<keyword id="KW-0395">Inflammatory response</keyword>
<keyword id="KW-0399">Innate immunity</keyword>
<keyword id="KW-1017">Isopeptide bond</keyword>
<keyword id="KW-0464">Manganese</keyword>
<keyword id="KW-0479">Metal-binding</keyword>
<keyword id="KW-0488">Methylation</keyword>
<keyword id="KW-0507">mRNA processing</keyword>
<keyword id="KW-0508">mRNA splicing</keyword>
<keyword id="KW-0509">mRNA transport</keyword>
<keyword id="KW-0547">Nucleotide-binding</keyword>
<keyword id="KW-0539">Nucleus</keyword>
<keyword id="KW-0597">Phosphoprotein</keyword>
<keyword id="KW-1185">Reference proteome</keyword>
<keyword id="KW-0677">Repeat</keyword>
<keyword id="KW-0694">RNA-binding</keyword>
<keyword id="KW-0943">RNA-mediated gene silencing</keyword>
<keyword id="KW-0804">Transcription</keyword>
<keyword id="KW-0805">Transcription regulation</keyword>
<keyword id="KW-0806">Transcription termination</keyword>
<keyword id="KW-0810">Translation regulation</keyword>
<keyword id="KW-0813">Transport</keyword>
<keyword id="KW-0832">Ubl conjugation</keyword>
<proteinExistence type="evidence at transcript level"/>
<name>DHX9_PONAB</name>
<sequence length="1269" mass="140917">MGDVKNFLYAWCGKRKMTPSYEIRAVGNKNRQKFMCEVQVEGYNYTGMGNSTNKKDAQSNAARDFVNYLVRINEIKSEEVPAFGVASPPPLTDTPDTTANAEGDLPTTMGGPLPPHLALKAENNSEVGASGYGVPGPTWDRGANLKDYYSRKEEQEVQATLESEEVDLNAGLHGNWTLENAKARLNQYFQKEKIQGEYKYTQVGPDHNRSFIAEMTIYIKQLGRRIFAREHGSNKKLAAQSCALSLVRQLYHLGVVEAYSGLTKKKEGETVEPYKVNLSQDLEHQLQNIIQELNLEILPPPEDPSVPVALNIGKLAQFEPSQRQNQVGVVPWSPPQSNWNPWTSSNIDEGPLAFATPEQISMDLKNELMYQLEQDHDLQAILQERELLPVKKFESEILEAISQNSVVIIRGATGCGKTTQVPQFILDDFIQNDRAAECNIVVTQPRRISAVSVAERVAFERGEEPGKSCGYSVRFESILPRPHASIMFCTVGVLLRKLEAGIRGISHVIVDEIHERDINTDFLLVVLRDVVQAYPEVRIVLMSATIDTSMFCEYFFNCPIIEVYGRTYPVQEYFLEDCIQMTHFVPPPKDKKKKDKDDDGGEDDDANCNLICGDEYGPETRLSMSQLNEKETPFELIEALLKYIETLNVPGAVLVFLPGWNLIYTMQKHLEMNPHFGSHRYQILPLHSQIPREEQRKVFDPVPVGVTKVILSTNIAETSITINDVVYVIDSCKQKVKLFTAHNNMTNYATVWASKTNLEQRKGRAGRVRPGFCFHLCSRARFERLETHMTPEMFRTPLHEIALSIKLLRLGGIGQFLAKAIEPPPLDAVIEAEHTLRELDALDANDELTPLGRILAKLPIEPRFGKMMIMGCIFYVGDAICTIAAATCFPEPFINEGKRLGYIHRNFAGNRFSDHVALLSVFQAWDDARMGGEEAEIRFCEHKRLNMATLRMTWEAKVQLKEILINSGFPEDCLLTQVFTNTGPDNNLDVVISLLAFGVYPNVCYHKEKRKILTTEGRNALIHKSSVNCPFSSQDMKYPSPFFVFGEKIRTRAISAKGMTLVTPLQLLLFASKKVQSDGQIVLVDDWIKLQISHEAAACITGLRAAMEALVVEVTKQPAIISQLDPVNERMLNMIRQISRPSAAGINLMIGSTRYGDGPRPPKMARYDNGSGYRRGGSSYSGGGYGSGYSSGGYGSGGYGGSANSFRAGYGGVGGGYRGVSRGGFRGNSGGDYRGPSGGYRGSGGFQRGGGRGAYGTGYFGQGRGGGGY</sequence>
<reference key="1">
    <citation type="submission" date="2004-11" db="EMBL/GenBank/DDBJ databases">
        <authorList>
            <consortium name="The German cDNA consortium"/>
        </authorList>
    </citation>
    <scope>NUCLEOTIDE SEQUENCE [LARGE SCALE MRNA]</scope>
    <source>
        <tissue>Kidney</tissue>
    </source>
</reference>
<protein>
    <recommendedName>
        <fullName evidence="2">ATP-dependent RNA helicase A</fullName>
        <ecNumber evidence="2">3.6.4.13</ecNumber>
    </recommendedName>
    <alternativeName>
        <fullName evidence="1">DEAH box protein 9</fullName>
    </alternativeName>
    <alternativeName>
        <fullName evidence="2">Nuclear DNA helicase II</fullName>
        <shortName evidence="2">NDH II</shortName>
    </alternativeName>
</protein>
<dbReference type="EC" id="3.6.4.13" evidence="2"/>
<dbReference type="EMBL" id="CR859880">
    <property type="protein sequence ID" value="CAH92036.1"/>
    <property type="molecule type" value="mRNA"/>
</dbReference>
<dbReference type="RefSeq" id="XP_002809755.1">
    <property type="nucleotide sequence ID" value="XM_002809709.5"/>
</dbReference>
<dbReference type="RefSeq" id="XP_009238528.1">
    <property type="nucleotide sequence ID" value="XM_009240253.1"/>
</dbReference>
<dbReference type="BMRB" id="Q5R874"/>
<dbReference type="SMR" id="Q5R874"/>
<dbReference type="FunCoup" id="Q5R874">
    <property type="interactions" value="3332"/>
</dbReference>
<dbReference type="STRING" id="9601.ENSPPYP00000000490"/>
<dbReference type="Ensembl" id="ENSPPYT00000000510.3">
    <property type="protein sequence ID" value="ENSPPYP00000000490.2"/>
    <property type="gene ID" value="ENSPPYG00000000431.3"/>
</dbReference>
<dbReference type="GeneID" id="100449914"/>
<dbReference type="KEGG" id="pon:100449914"/>
<dbReference type="CTD" id="1660"/>
<dbReference type="eggNOG" id="KOG0921">
    <property type="taxonomic scope" value="Eukaryota"/>
</dbReference>
<dbReference type="GeneTree" id="ENSGT00940000155924"/>
<dbReference type="HOGENOM" id="CLU_001832_1_2_1"/>
<dbReference type="InParanoid" id="Q5R874"/>
<dbReference type="OMA" id="ANWNTWH"/>
<dbReference type="OrthoDB" id="5600252at2759"/>
<dbReference type="TreeFam" id="TF313601"/>
<dbReference type="Proteomes" id="UP000001595">
    <property type="component" value="Chromosome 1"/>
</dbReference>
<dbReference type="GO" id="GO:0015629">
    <property type="term" value="C:actin cytoskeleton"/>
    <property type="evidence" value="ECO:0000250"/>
    <property type="project" value="UniProtKB"/>
</dbReference>
<dbReference type="GO" id="GO:0005813">
    <property type="term" value="C:centrosome"/>
    <property type="evidence" value="ECO:0007669"/>
    <property type="project" value="UniProtKB-SubCell"/>
</dbReference>
<dbReference type="GO" id="GO:0070937">
    <property type="term" value="C:CRD-mediated mRNA stability complex"/>
    <property type="evidence" value="ECO:0000250"/>
    <property type="project" value="UniProtKB"/>
</dbReference>
<dbReference type="GO" id="GO:0005737">
    <property type="term" value="C:cytoplasm"/>
    <property type="evidence" value="ECO:0000250"/>
    <property type="project" value="UniProtKB"/>
</dbReference>
<dbReference type="GO" id="GO:0036464">
    <property type="term" value="C:cytoplasmic ribonucleoprotein granule"/>
    <property type="evidence" value="ECO:0000250"/>
    <property type="project" value="UniProtKB"/>
</dbReference>
<dbReference type="GO" id="GO:0005829">
    <property type="term" value="C:cytosol"/>
    <property type="evidence" value="ECO:0007669"/>
    <property type="project" value="Ensembl"/>
</dbReference>
<dbReference type="GO" id="GO:0016604">
    <property type="term" value="C:nuclear body"/>
    <property type="evidence" value="ECO:0000250"/>
    <property type="project" value="UniProtKB"/>
</dbReference>
<dbReference type="GO" id="GO:0097165">
    <property type="term" value="C:nuclear stress granule"/>
    <property type="evidence" value="ECO:0000250"/>
    <property type="project" value="UniProtKB"/>
</dbReference>
<dbReference type="GO" id="GO:0005730">
    <property type="term" value="C:nucleolus"/>
    <property type="evidence" value="ECO:0007669"/>
    <property type="project" value="UniProtKB-SubCell"/>
</dbReference>
<dbReference type="GO" id="GO:0005654">
    <property type="term" value="C:nucleoplasm"/>
    <property type="evidence" value="ECO:0000250"/>
    <property type="project" value="UniProtKB"/>
</dbReference>
<dbReference type="GO" id="GO:0005634">
    <property type="term" value="C:nucleus"/>
    <property type="evidence" value="ECO:0000250"/>
    <property type="project" value="UniProtKB"/>
</dbReference>
<dbReference type="GO" id="GO:0005726">
    <property type="term" value="C:perichromatin fibrils"/>
    <property type="evidence" value="ECO:0000250"/>
    <property type="project" value="UniProtKB"/>
</dbReference>
<dbReference type="GO" id="GO:1990904">
    <property type="term" value="C:ribonucleoprotein complex"/>
    <property type="evidence" value="ECO:0000250"/>
    <property type="project" value="UniProtKB"/>
</dbReference>
<dbReference type="GO" id="GO:0016442">
    <property type="term" value="C:RISC complex"/>
    <property type="evidence" value="ECO:0000250"/>
    <property type="project" value="UniProtKB"/>
</dbReference>
<dbReference type="GO" id="GO:0070578">
    <property type="term" value="C:RISC-loading complex"/>
    <property type="evidence" value="ECO:0000250"/>
    <property type="project" value="UniProtKB"/>
</dbReference>
<dbReference type="GO" id="GO:0043138">
    <property type="term" value="F:3'-5' DNA helicase activity"/>
    <property type="evidence" value="ECO:0000250"/>
    <property type="project" value="UniProtKB"/>
</dbReference>
<dbReference type="GO" id="GO:0033679">
    <property type="term" value="F:3'-5' DNA/RNA helicase activity"/>
    <property type="evidence" value="ECO:0000250"/>
    <property type="project" value="UniProtKB"/>
</dbReference>
<dbReference type="GO" id="GO:0034458">
    <property type="term" value="F:3'-5' RNA helicase activity"/>
    <property type="evidence" value="ECO:0000250"/>
    <property type="project" value="UniProtKB"/>
</dbReference>
<dbReference type="GO" id="GO:0005524">
    <property type="term" value="F:ATP binding"/>
    <property type="evidence" value="ECO:0007669"/>
    <property type="project" value="UniProtKB-KW"/>
</dbReference>
<dbReference type="GO" id="GO:0016887">
    <property type="term" value="F:ATP hydrolysis activity"/>
    <property type="evidence" value="ECO:0000250"/>
    <property type="project" value="UniProtKB"/>
</dbReference>
<dbReference type="GO" id="GO:0140640">
    <property type="term" value="F:catalytic activity, acting on a nucleic acid"/>
    <property type="evidence" value="ECO:0000250"/>
    <property type="project" value="UniProtKB"/>
</dbReference>
<dbReference type="GO" id="GO:0031490">
    <property type="term" value="F:chromatin DNA binding"/>
    <property type="evidence" value="ECO:0000250"/>
    <property type="project" value="UniProtKB"/>
</dbReference>
<dbReference type="GO" id="GO:0003677">
    <property type="term" value="F:DNA binding"/>
    <property type="evidence" value="ECO:0000250"/>
    <property type="project" value="UniProtKB"/>
</dbReference>
<dbReference type="GO" id="GO:0003678">
    <property type="term" value="F:DNA helicase activity"/>
    <property type="evidence" value="ECO:0000250"/>
    <property type="project" value="UniProtKB"/>
</dbReference>
<dbReference type="GO" id="GO:0003688">
    <property type="term" value="F:DNA replication origin binding"/>
    <property type="evidence" value="ECO:0000250"/>
    <property type="project" value="UniProtKB"/>
</dbReference>
<dbReference type="GO" id="GO:0003690">
    <property type="term" value="F:double-stranded DNA binding"/>
    <property type="evidence" value="ECO:0000250"/>
    <property type="project" value="UniProtKB"/>
</dbReference>
<dbReference type="GO" id="GO:0003725">
    <property type="term" value="F:double-stranded RNA binding"/>
    <property type="evidence" value="ECO:0000250"/>
    <property type="project" value="UniProtKB"/>
</dbReference>
<dbReference type="GO" id="GO:0061676">
    <property type="term" value="F:importin-alpha family protein binding"/>
    <property type="evidence" value="ECO:0000250"/>
    <property type="project" value="UniProtKB"/>
</dbReference>
<dbReference type="GO" id="GO:0046872">
    <property type="term" value="F:metal ion binding"/>
    <property type="evidence" value="ECO:0007669"/>
    <property type="project" value="UniProtKB-KW"/>
</dbReference>
<dbReference type="GO" id="GO:0003729">
    <property type="term" value="F:mRNA binding"/>
    <property type="evidence" value="ECO:0000250"/>
    <property type="project" value="UniProtKB"/>
</dbReference>
<dbReference type="GO" id="GO:0047429">
    <property type="term" value="F:nucleoside triphosphate diphosphatase activity"/>
    <property type="evidence" value="ECO:0000250"/>
    <property type="project" value="UniProtKB"/>
</dbReference>
<dbReference type="GO" id="GO:1990841">
    <property type="term" value="F:promoter-specific chromatin binding"/>
    <property type="evidence" value="ECO:0000250"/>
    <property type="project" value="UniProtKB"/>
</dbReference>
<dbReference type="GO" id="GO:0001069">
    <property type="term" value="F:regulatory region RNA binding"/>
    <property type="evidence" value="ECO:0007669"/>
    <property type="project" value="Ensembl"/>
</dbReference>
<dbReference type="GO" id="GO:0017111">
    <property type="term" value="F:ribonucleoside triphosphate phosphatase activity"/>
    <property type="evidence" value="ECO:0000250"/>
    <property type="project" value="UniProtKB"/>
</dbReference>
<dbReference type="GO" id="GO:0043022">
    <property type="term" value="F:ribosome binding"/>
    <property type="evidence" value="ECO:0007669"/>
    <property type="project" value="Ensembl"/>
</dbReference>
<dbReference type="GO" id="GO:1905172">
    <property type="term" value="F:RISC complex binding"/>
    <property type="evidence" value="ECO:0000250"/>
    <property type="project" value="UniProtKB"/>
</dbReference>
<dbReference type="GO" id="GO:0003723">
    <property type="term" value="F:RNA binding"/>
    <property type="evidence" value="ECO:0000250"/>
    <property type="project" value="UniProtKB"/>
</dbReference>
<dbReference type="GO" id="GO:0003724">
    <property type="term" value="F:RNA helicase activity"/>
    <property type="evidence" value="ECO:0000250"/>
    <property type="project" value="UniProtKB"/>
</dbReference>
<dbReference type="GO" id="GO:0070063">
    <property type="term" value="F:RNA polymerase binding"/>
    <property type="evidence" value="ECO:0000250"/>
    <property type="project" value="UniProtKB"/>
</dbReference>
<dbReference type="GO" id="GO:0000978">
    <property type="term" value="F:RNA polymerase II cis-regulatory region sequence-specific DNA binding"/>
    <property type="evidence" value="ECO:0000250"/>
    <property type="project" value="UniProtKB"/>
</dbReference>
<dbReference type="GO" id="GO:0000993">
    <property type="term" value="F:RNA polymerase II complex binding"/>
    <property type="evidence" value="ECO:0007669"/>
    <property type="project" value="Ensembl"/>
</dbReference>
<dbReference type="GO" id="GO:0061629">
    <property type="term" value="F:RNA polymerase II-specific DNA-binding transcription factor binding"/>
    <property type="evidence" value="ECO:0007669"/>
    <property type="project" value="Ensembl"/>
</dbReference>
<dbReference type="GO" id="GO:0035613">
    <property type="term" value="F:RNA stem-loop binding"/>
    <property type="evidence" value="ECO:0000250"/>
    <property type="project" value="UniProtKB"/>
</dbReference>
<dbReference type="GO" id="GO:1990825">
    <property type="term" value="F:sequence-specific mRNA binding"/>
    <property type="evidence" value="ECO:0000250"/>
    <property type="project" value="UniProtKB"/>
</dbReference>
<dbReference type="GO" id="GO:1990518">
    <property type="term" value="F:single-stranded 3'-5' DNA helicase activity"/>
    <property type="evidence" value="ECO:0000250"/>
    <property type="project" value="UniProtKB"/>
</dbReference>
<dbReference type="GO" id="GO:0003697">
    <property type="term" value="F:single-stranded DNA binding"/>
    <property type="evidence" value="ECO:0000250"/>
    <property type="project" value="UniProtKB"/>
</dbReference>
<dbReference type="GO" id="GO:0003727">
    <property type="term" value="F:single-stranded RNA binding"/>
    <property type="evidence" value="ECO:0000250"/>
    <property type="project" value="UniProtKB"/>
</dbReference>
<dbReference type="GO" id="GO:0035197">
    <property type="term" value="F:siRNA binding"/>
    <property type="evidence" value="ECO:0007669"/>
    <property type="project" value="Ensembl"/>
</dbReference>
<dbReference type="GO" id="GO:0003713">
    <property type="term" value="F:transcription coactivator activity"/>
    <property type="evidence" value="ECO:0000250"/>
    <property type="project" value="UniProtKB"/>
</dbReference>
<dbReference type="GO" id="GO:0045142">
    <property type="term" value="F:triplex DNA binding"/>
    <property type="evidence" value="ECO:0000250"/>
    <property type="project" value="UniProtKB"/>
</dbReference>
<dbReference type="GO" id="GO:0000380">
    <property type="term" value="P:alternative mRNA splicing, via spliceosome"/>
    <property type="evidence" value="ECO:0000250"/>
    <property type="project" value="UniProtKB"/>
</dbReference>
<dbReference type="GO" id="GO:0071360">
    <property type="term" value="P:cellular response to exogenous dsRNA"/>
    <property type="evidence" value="ECO:0000250"/>
    <property type="project" value="UniProtKB"/>
</dbReference>
<dbReference type="GO" id="GO:0006325">
    <property type="term" value="P:chromatin organization"/>
    <property type="evidence" value="ECO:0000250"/>
    <property type="project" value="UniProtKB"/>
</dbReference>
<dbReference type="GO" id="GO:0070934">
    <property type="term" value="P:CRD-mediated mRNA stabilization"/>
    <property type="evidence" value="ECO:0007669"/>
    <property type="project" value="Ensembl"/>
</dbReference>
<dbReference type="GO" id="GO:0006260">
    <property type="term" value="P:DNA replication"/>
    <property type="evidence" value="ECO:0007669"/>
    <property type="project" value="UniProtKB-KW"/>
</dbReference>
<dbReference type="GO" id="GO:0006353">
    <property type="term" value="P:DNA-templated transcription termination"/>
    <property type="evidence" value="ECO:0007669"/>
    <property type="project" value="UniProtKB-KW"/>
</dbReference>
<dbReference type="GO" id="GO:0039695">
    <property type="term" value="P:DNA-templated viral transcription"/>
    <property type="evidence" value="ECO:0007669"/>
    <property type="project" value="Ensembl"/>
</dbReference>
<dbReference type="GO" id="GO:0006954">
    <property type="term" value="P:inflammatory response"/>
    <property type="evidence" value="ECO:0007669"/>
    <property type="project" value="UniProtKB-KW"/>
</dbReference>
<dbReference type="GO" id="GO:0045087">
    <property type="term" value="P:innate immune response"/>
    <property type="evidence" value="ECO:0007669"/>
    <property type="project" value="UniProtKB-KW"/>
</dbReference>
<dbReference type="GO" id="GO:0035195">
    <property type="term" value="P:miRNA-mediated post-transcriptional gene silencing"/>
    <property type="evidence" value="ECO:0000250"/>
    <property type="project" value="UniProtKB"/>
</dbReference>
<dbReference type="GO" id="GO:0051028">
    <property type="term" value="P:mRNA transport"/>
    <property type="evidence" value="ECO:0007669"/>
    <property type="project" value="UniProtKB-KW"/>
</dbReference>
<dbReference type="GO" id="GO:1900152">
    <property type="term" value="P:negative regulation of nuclear-transcribed mRNA catabolic process, deadenylation-dependent decay"/>
    <property type="evidence" value="ECO:0007669"/>
    <property type="project" value="Ensembl"/>
</dbReference>
<dbReference type="GO" id="GO:2000767">
    <property type="term" value="P:positive regulation of cytoplasmic translation"/>
    <property type="evidence" value="ECO:0000250"/>
    <property type="project" value="UniProtKB"/>
</dbReference>
<dbReference type="GO" id="GO:0045739">
    <property type="term" value="P:positive regulation of DNA repair"/>
    <property type="evidence" value="ECO:0000250"/>
    <property type="project" value="UniProtKB"/>
</dbReference>
<dbReference type="GO" id="GO:0045740">
    <property type="term" value="P:positive regulation of DNA replication"/>
    <property type="evidence" value="ECO:0000250"/>
    <property type="project" value="UniProtKB"/>
</dbReference>
<dbReference type="GO" id="GO:0048146">
    <property type="term" value="P:positive regulation of fibroblast proliferation"/>
    <property type="evidence" value="ECO:0000250"/>
    <property type="project" value="UniProtKB"/>
</dbReference>
<dbReference type="GO" id="GO:0032727">
    <property type="term" value="P:positive regulation of interferon-alpha production"/>
    <property type="evidence" value="ECO:0000250"/>
    <property type="project" value="UniProtKB"/>
</dbReference>
<dbReference type="GO" id="GO:0032728">
    <property type="term" value="P:positive regulation of interferon-beta production"/>
    <property type="evidence" value="ECO:0000250"/>
    <property type="project" value="UniProtKB"/>
</dbReference>
<dbReference type="GO" id="GO:0032755">
    <property type="term" value="P:positive regulation of interleukin-6 production"/>
    <property type="evidence" value="ECO:0000250"/>
    <property type="project" value="UniProtKB"/>
</dbReference>
<dbReference type="GO" id="GO:0051092">
    <property type="term" value="P:positive regulation of NF-kappaB transcription factor activity"/>
    <property type="evidence" value="ECO:0000250"/>
    <property type="project" value="UniProtKB"/>
</dbReference>
<dbReference type="GO" id="GO:0060760">
    <property type="term" value="P:positive regulation of response to cytokine stimulus"/>
    <property type="evidence" value="ECO:0000250"/>
    <property type="project" value="UniProtKB"/>
</dbReference>
<dbReference type="GO" id="GO:0046833">
    <property type="term" value="P:positive regulation of RNA export from nucleus"/>
    <property type="evidence" value="ECO:0000250"/>
    <property type="project" value="UniProtKB"/>
</dbReference>
<dbReference type="GO" id="GO:0045944">
    <property type="term" value="P:positive regulation of transcription by RNA polymerase II"/>
    <property type="evidence" value="ECO:0000250"/>
    <property type="project" value="UniProtKB"/>
</dbReference>
<dbReference type="GO" id="GO:0032760">
    <property type="term" value="P:positive regulation of tumor necrosis factor production"/>
    <property type="evidence" value="ECO:0000250"/>
    <property type="project" value="UniProtKB"/>
</dbReference>
<dbReference type="GO" id="GO:0050434">
    <property type="term" value="P:positive regulation of viral transcription"/>
    <property type="evidence" value="ECO:0007669"/>
    <property type="project" value="Ensembl"/>
</dbReference>
<dbReference type="GO" id="GO:1903608">
    <property type="term" value="P:protein localization to cytoplasmic stress granule"/>
    <property type="evidence" value="ECO:0007669"/>
    <property type="project" value="Ensembl"/>
</dbReference>
<dbReference type="GO" id="GO:2000765">
    <property type="term" value="P:regulation of cytoplasmic translation"/>
    <property type="evidence" value="ECO:0000250"/>
    <property type="project" value="UniProtKB"/>
</dbReference>
<dbReference type="GO" id="GO:0050684">
    <property type="term" value="P:regulation of mRNA processing"/>
    <property type="evidence" value="ECO:0000250"/>
    <property type="project" value="UniProtKB"/>
</dbReference>
<dbReference type="GO" id="GO:0048511">
    <property type="term" value="P:rhythmic process"/>
    <property type="evidence" value="ECO:0007669"/>
    <property type="project" value="UniProtKB-KW"/>
</dbReference>
<dbReference type="GO" id="GO:0070922">
    <property type="term" value="P:RISC complex assembly"/>
    <property type="evidence" value="ECO:0000250"/>
    <property type="project" value="UniProtKB"/>
</dbReference>
<dbReference type="CDD" id="cd17972">
    <property type="entry name" value="DEXHc_DHX9"/>
    <property type="match status" value="1"/>
</dbReference>
<dbReference type="CDD" id="cd19854">
    <property type="entry name" value="DSRM_DHX9_rpt1"/>
    <property type="match status" value="1"/>
</dbReference>
<dbReference type="CDD" id="cd19855">
    <property type="entry name" value="DSRM_DHX9_rpt2"/>
    <property type="match status" value="1"/>
</dbReference>
<dbReference type="CDD" id="cd18791">
    <property type="entry name" value="SF2_C_RHA"/>
    <property type="match status" value="1"/>
</dbReference>
<dbReference type="FunFam" id="3.30.160.20:FF:000026">
    <property type="entry name" value="ATP-dependent RNA helicase A"/>
    <property type="match status" value="1"/>
</dbReference>
<dbReference type="FunFam" id="3.30.160.20:FF:000028">
    <property type="entry name" value="ATP-dependent RNA helicase A"/>
    <property type="match status" value="1"/>
</dbReference>
<dbReference type="FunFam" id="3.40.50.300:FF:000677">
    <property type="entry name" value="ATP-dependent RNA helicase A"/>
    <property type="match status" value="1"/>
</dbReference>
<dbReference type="FunFam" id="1.20.120.1080:FF:000006">
    <property type="entry name" value="ATP-dependent RNA helicase A protein"/>
    <property type="match status" value="1"/>
</dbReference>
<dbReference type="FunFam" id="3.40.50.300:FF:000284">
    <property type="entry name" value="probable ATP-dependent RNA helicase YTHDC2"/>
    <property type="match status" value="1"/>
</dbReference>
<dbReference type="Gene3D" id="1.20.120.1080">
    <property type="match status" value="1"/>
</dbReference>
<dbReference type="Gene3D" id="3.30.160.20">
    <property type="match status" value="2"/>
</dbReference>
<dbReference type="Gene3D" id="3.40.50.300">
    <property type="entry name" value="P-loop containing nucleotide triphosphate hydrolases"/>
    <property type="match status" value="2"/>
</dbReference>
<dbReference type="InterPro" id="IPR011709">
    <property type="entry name" value="DEAD-box_helicase_OB_fold"/>
</dbReference>
<dbReference type="InterPro" id="IPR011545">
    <property type="entry name" value="DEAD/DEAH_box_helicase_dom"/>
</dbReference>
<dbReference type="InterPro" id="IPR044447">
    <property type="entry name" value="DHX9_DEXHc"/>
</dbReference>
<dbReference type="InterPro" id="IPR044445">
    <property type="entry name" value="DHX9_DSRM_1"/>
</dbReference>
<dbReference type="InterPro" id="IPR044446">
    <property type="entry name" value="DHX9_DSRM_2"/>
</dbReference>
<dbReference type="InterPro" id="IPR002464">
    <property type="entry name" value="DNA/RNA_helicase_DEAH_CS"/>
</dbReference>
<dbReference type="InterPro" id="IPR014720">
    <property type="entry name" value="dsRBD_dom"/>
</dbReference>
<dbReference type="InterPro" id="IPR048333">
    <property type="entry name" value="HA2_WH"/>
</dbReference>
<dbReference type="InterPro" id="IPR007502">
    <property type="entry name" value="Helicase-assoc_dom"/>
</dbReference>
<dbReference type="InterPro" id="IPR014001">
    <property type="entry name" value="Helicase_ATP-bd"/>
</dbReference>
<dbReference type="InterPro" id="IPR001650">
    <property type="entry name" value="Helicase_C-like"/>
</dbReference>
<dbReference type="InterPro" id="IPR027417">
    <property type="entry name" value="P-loop_NTPase"/>
</dbReference>
<dbReference type="PANTHER" id="PTHR18934">
    <property type="entry name" value="ATP-DEPENDENT RNA HELICASE"/>
    <property type="match status" value="1"/>
</dbReference>
<dbReference type="PANTHER" id="PTHR18934:SF119">
    <property type="entry name" value="ATP-DEPENDENT RNA HELICASE A"/>
    <property type="match status" value="1"/>
</dbReference>
<dbReference type="Pfam" id="PF00270">
    <property type="entry name" value="DEAD"/>
    <property type="match status" value="1"/>
</dbReference>
<dbReference type="Pfam" id="PF00035">
    <property type="entry name" value="dsrm"/>
    <property type="match status" value="2"/>
</dbReference>
<dbReference type="Pfam" id="PF21010">
    <property type="entry name" value="HA2_C"/>
    <property type="match status" value="1"/>
</dbReference>
<dbReference type="Pfam" id="PF04408">
    <property type="entry name" value="HA2_N"/>
    <property type="match status" value="1"/>
</dbReference>
<dbReference type="Pfam" id="PF00271">
    <property type="entry name" value="Helicase_C"/>
    <property type="match status" value="1"/>
</dbReference>
<dbReference type="Pfam" id="PF07717">
    <property type="entry name" value="OB_NTP_bind"/>
    <property type="match status" value="1"/>
</dbReference>
<dbReference type="SMART" id="SM00487">
    <property type="entry name" value="DEXDc"/>
    <property type="match status" value="1"/>
</dbReference>
<dbReference type="SMART" id="SM00358">
    <property type="entry name" value="DSRM"/>
    <property type="match status" value="2"/>
</dbReference>
<dbReference type="SMART" id="SM00847">
    <property type="entry name" value="HA2"/>
    <property type="match status" value="1"/>
</dbReference>
<dbReference type="SMART" id="SM00490">
    <property type="entry name" value="HELICc"/>
    <property type="match status" value="1"/>
</dbReference>
<dbReference type="SUPFAM" id="SSF54768">
    <property type="entry name" value="dsRNA-binding domain-like"/>
    <property type="match status" value="2"/>
</dbReference>
<dbReference type="SUPFAM" id="SSF52540">
    <property type="entry name" value="P-loop containing nucleoside triphosphate hydrolases"/>
    <property type="match status" value="1"/>
</dbReference>
<dbReference type="PROSITE" id="PS00690">
    <property type="entry name" value="DEAH_ATP_HELICASE"/>
    <property type="match status" value="1"/>
</dbReference>
<dbReference type="PROSITE" id="PS50137">
    <property type="entry name" value="DS_RBD"/>
    <property type="match status" value="2"/>
</dbReference>
<dbReference type="PROSITE" id="PS51192">
    <property type="entry name" value="HELICASE_ATP_BIND_1"/>
    <property type="match status" value="1"/>
</dbReference>
<dbReference type="PROSITE" id="PS51194">
    <property type="entry name" value="HELICASE_CTER"/>
    <property type="match status" value="1"/>
</dbReference>
<accession>Q5R874</accession>
<comment type="function">
    <text evidence="2">Multifunctional ATP-dependent nucleic acid helicase that unwinds DNA and RNA in a 3' to 5' direction and that plays important roles in many processes, such as DNA replication, transcriptional activation, post-transcriptional RNA regulation, mRNA translation and RNA-mediated gene silencing. Requires a 3'-single-stranded tail as entry site for acid nuclei unwinding activities as well as the binding and hydrolyzing of any of the four ribo- or deoxyribo-nucleotide triphosphates (NTPs). Unwinds numerous nucleic acid substrates such as double-stranded (ds) DNA and RNA, DNA:RNA hybrids, DNA and RNA forks composed of either partially complementary DNA duplexes or DNA:RNA hybrids, respectively, and also DNA and RNA displacement loops (D- and R-loops), triplex-helical DNA (H-DNA) structure and DNA and RNA-based G-quadruplexes. Binds dsDNA, single-stranded DNA (ssDNA), dsRNA, ssRNA and poly(A)-containing RNA. Also binds to circular dsDNA or dsRNA of either linear and/or circular forms and stimulates the relaxation of supercoiled DNAs catalyzed by topoisomerase TOP2A. Plays a role in DNA replication at origins of replication and cell cycle progression. Plays a role as a transcriptional coactivator acting as a bridging factor between polymerase II holoenzyme and transcription factors or cofactors, such as BRCA1, CREBBP, RELA and SMN1. Binds to the CDKN2A promoter. Plays several roles in post-transcriptional regulation of gene expression. In cooperation with NUP98, promotes pre-mRNA alternative splicing activities of a subset of genes. As component of a large PER complex, is involved in the negative regulation of 3' transcriptional termination of circadian target genes such as PER1 and NR1D1 and the control of the circadian rhythms. Also acts as a nuclear resolvase that is able to bind and neutralize harmful massive secondary double-stranded RNA structures formed by inverted-repeat Alu retrotransposon elements that are inserted and transcribed as parts of genes during the process of gene transposition. Involved in the positive regulation of nuclear export of constitutive transport element (CTE)-containing unspliced mRNA. Component of the coding region determinant (CRD)-mediated complex that promotes cytoplasmic MYC mRNA stability. Plays a role in mRNA translation. Positively regulates translation of selected mRNAs through its binding to post-transcriptional control element (PCE) in the 5'-untranslated region (UTR). Involved with LARP6 in the translation stimulation of type I collagen mRNAs for CO1A1 and CO1A2 through binding of a specific stem-loop structure in their 5'-UTRs. Stimulates LIN28A-dependent mRNA translation probably by facilitating ribonucleoprotein remodeling during the process of translation. Also plays a role as a small interfering (siRNA)-loading factor involved in the RNA-induced silencing complex (RISC) loading complex (RLC) assembly, and hence functions in the RISC-mediated gene silencing process. Binds preferentially to short double-stranded RNA, such as those produced during rotavirus intestinal infection. This interaction may mediate NLRP9 inflammasome activation and trigger inflammatory response, including IL18 release and pyroptosis. Finally, mediates the attachment of heterogeneous nuclear ribonucleoproteins (hnRNPs) to actin filaments in the nucleus.</text>
</comment>
<comment type="catalytic activity">
    <reaction evidence="2">
        <text>ATP + H2O = ADP + phosphate + H(+)</text>
        <dbReference type="Rhea" id="RHEA:13065"/>
        <dbReference type="ChEBI" id="CHEBI:15377"/>
        <dbReference type="ChEBI" id="CHEBI:15378"/>
        <dbReference type="ChEBI" id="CHEBI:30616"/>
        <dbReference type="ChEBI" id="CHEBI:43474"/>
        <dbReference type="ChEBI" id="CHEBI:456216"/>
        <dbReference type="EC" id="3.6.4.13"/>
    </reaction>
</comment>
<comment type="subunit">
    <text evidence="1 2">Component of the coding region determinant (CRD)-mediated complex, composed of DHX9, HNRNPU, IGF2BP1, SYNCRIP and YBX1. Identified in a mRNP complex, at least composed of DHX9, DDX3X, ELAVL1, HNRNPU, IGF2BP1, ILF3, PABPC1, PCBP2, PTBP2, STAU1, STAU2, SYNCRIP and YBX1. Identified in a IGF2BP1-dependent mRNP granule complex containing untranslated mRNAs (By similarity). The large PER complex involved in the repression of transcriptional termination is composed of at least PER2, CDK9, DDX5, DHX9, NCBP1 and POLR2A (active) (By similarity). Associates (via DRBM domains) with the RISC complex; this association occurs in a small interfering (siRNA)-dependent manner. Associates with the SMN complex; this association induces recruitment of DHX9 to the RNA polymerase II. Associates with polysomes in a LIN28A-dependent manner. Interacts (via C-terminus) with ACTB; this interaction is direct and mediates the attachment to nuclear ribonucleoprotein complexes. Interacts with ADAR isoform 1; this interaction occurs in a RNA-independent manner. Interacts (via DRBM domains) with AGO2 (via middle region); this interaction promotes active RISC assembly by promoting the association of siRNA with AGO2. Interacts (via NTD domain) with AKAP8L (via N-terminus). Interacts with BRCA1 (via C-terminus); this interaction is direct and links BRCA1 to the RNA polymerase II holoenzyme. Interacts (via N-terminus) with CREBBP; this interaction mediates association with RNA polymerase II holoenzyme and stimulates CREB-dependent transcriptional activation. Interacts (via N-terminus) with EIF2AK2/PKR; this interaction is dependent upon the activation of the kinase. Interacts (via DRBM domains) with DICER1. Interacts with H2AX; this interaction is direct, requires phosphorylation of histone H2AX by PRKDC and promotes binding of DHX9 to transcriptionally stalled sites on chromosomal DNA in response to genotoxic stress. Interacts with HNRNPC; this interaction is direct, enhanced probably by their concomitant binding to RNA and mediates the attachment to actin filaments. Interacts (via NTD domain) with PRMT1. Interacts with IGF2BP1. Interacts with IGF2BP2, IGF2BP3. Interacts (via DRBM domains) with ILF3; this interaction occurs in a RNA-independent manner. Interacts with Importin alpha/Importin beta receptor. Interacts with LARP6 (via C-terminus); this interaction occurs in a mRNA-independent manner. Interacts (via N- and C-terminus) with LIN28A (via C-terminus); this interaction occurs in a RNA-independent manner. Interacts with LMX1B. Interacts (via helicase C-terminal domain, HA2 and OB-fold regions) with MAVS (via CARD domain); this interaction occurs in both resting and double-stranded RNA poly(I:C)-induced cells. Interacts with MBD2; this interaction stimulates transcriptional activation in a CREB-dependent manner. Interacts (via H2A and OB-fold regions) with MYD88 (via TIR domain); this interaction is direct. Interacts with NLRP9 upon rotavirus infection; this interaction may trigger NLRP9 inflammasome activation and inflammatory response. Interacts (via DRBM, OB-fold and RGG regions) with NUP98 (via N-terminus); this interaction occurs in a RNA-dependent manner and stimulates DHX9-mediated ATPase activity and regulates transcription and splicing of a subset of genes. Interacts (via N-terminus) with NXF1 (via N-terminus); this interaction is direct and negatively regulates NXF1-mediated nuclear export of constitutive transport element (CTE)-containing cellular mRNAs. Interacts with RELA; this interaction is direct and activates NF-kappa-B-mediated transcription. Interacts (via MTAD region) with RNA polymerase II holoenzyme; this interaction stimulates transcription activation in a CREB-dependent manner. Interacts (via RGG region) with SMN1; this interaction links SMN1 to the RNA polymerase II holoenzyme (ref.8). Interacts with SP7. Interacts (via DRBM domains) with TARBP2 (via DRBM first and second domains); this interaction occurs in a small interfering (siRNA)-dependent manner. Interacts with TOP2A; this interaction occurs in a E2 enzyme UBE2I- and RNA-dependent manner, negatively regulates DHX9-mediated double-stranded DNA and RNA duplex helicase activity and stimulates TOP2A-mediated supercoiled DNA relaxation activity. Interacts (via DRBM domains and C-terminus) with WRN (via 3'-5' exonuclease domain); this interaction inhibits the DNA-dependent NTPase and DNA helicase activities of DHX9 and stimulates the 3'-5' exonuclease activity of WRN. Interacts with XRCC5; this interaction occurs in a RNA-dependent manner. Interacts with ZIC2 (via C2H2-type domain 3) (By similarity). Interacts with MCM3AP (By similarity).</text>
</comment>
<comment type="subcellular location">
    <subcellularLocation>
        <location evidence="2">Nucleus</location>
    </subcellularLocation>
    <subcellularLocation>
        <location evidence="2">Nucleus</location>
        <location evidence="2">Nucleoplasm</location>
    </subcellularLocation>
    <subcellularLocation>
        <location evidence="2">Nucleus</location>
        <location evidence="2">Nucleolus</location>
    </subcellularLocation>
    <subcellularLocation>
        <location evidence="2">Cytoplasm</location>
    </subcellularLocation>
    <subcellularLocation>
        <location evidence="2">Cytoplasm</location>
        <location evidence="2">Cytoskeleton</location>
        <location evidence="2">Microtubule organizing center</location>
        <location evidence="2">Centrosome</location>
    </subcellularLocation>
    <text evidence="2">Nucleoplasmic shuttling protein. Its nuclear import involves the nucleocytoplasmic transport receptor Importin alpha/Importin beta receptor pathway in a Ran-dependent manner. In interphase, localizes in nuclear stress granules and at perichromatin fibrils and in cytoplasmic ribonucleoprotein granules. Colocalizes with WRN and H2AX at centrosomes in a microtubule-dependent manner following DNA damaging agent treatment. Excluded from the mitotic nucleus as early as prophase and re-entered the nucleus at telophase. Recruited in diffuse and discrete intranuclear foci (GLFG-body) in a NUP98-dependent manner. Colocalizes with SP7 in the nucleus. Colocalizes with ACTB at nuclear actin filaments inside the nucleus or at the nuclear pore. Colocalizes with HNRNPC at nuclear ribonucleoprotein complex proteins in the nucleus. Localized in cytoplasmic mRNP granules containing untranslated mRNAs.</text>
</comment>
<comment type="domain">
    <text evidence="2">DRBM domains cooperate for the binding to nucleic acid but not for unwinding helicase activity. The helicase-associated domain-2 (HA2) region is essential for the duplex RNA unwinding helicase activity. The minimal transactivation region (MTAD) mediates interaction with the RNA polymerase II holoenzyme and stimulates transcriptional activation in a CREB-dependent manner. The oligonucleotide- or oligosaccharide-binding (OB-fold) and the repeated arginine and glycine-glycine (RGG) regions are dispensable for both RNA-binding and unwinding helicase activities. The RGG region contains both nuclear localization signal (NLS) and nuclear export signal (NES) and is necessary and sufficient for nucleocytoplasmic shuttling in a RNA-independent manner.</text>
</comment>
<comment type="PTM">
    <text evidence="2">Methylated. PRMT1-mediated methylation of undefined Arg residues in the nuclear transport domain (NTD) is required for nuclear import of DHX9.</text>
</comment>
<comment type="PTM">
    <text evidence="2">Phosphorylated by PRKDC; phosphorylation occurs in a RNA-dependent manner. Phosphorylated by EIF2AK2/PKR; this phosphorylation reduces its association with double-stranded RNA.</text>
</comment>
<comment type="similarity">
    <text evidence="8">Belongs to the DEAD box helicase family. DEAH subfamily.</text>
</comment>
<gene>
    <name evidence="2" type="primary">DHX9</name>
</gene>